<comment type="subcellular location">
    <subcellularLocation>
        <location>Cell inner membrane</location>
        <topology>Multi-pass membrane protein</topology>
    </subcellularLocation>
</comment>
<comment type="similarity">
    <text evidence="2">To E.coli YibI.</text>
</comment>
<proteinExistence type="evidence at protein level"/>
<sequence length="107" mass="12409">MFLDYFALGVLIFVFLVIFYGIIILHDIPYLIAKKRNHPHADAIHVAGWVSLFTLHVIWPFLWIWATLYRPERGWGMQSHDSSVMQLQQRIAGLEKQLADIKSSSAE</sequence>
<feature type="chain" id="PRO_0000169602" description="Inner membrane protein YiaW">
    <location>
        <begin position="1"/>
        <end position="107"/>
    </location>
</feature>
<feature type="topological domain" description="Cytoplasmic" evidence="1">
    <location>
        <begin position="1"/>
        <end position="6"/>
    </location>
</feature>
<feature type="transmembrane region" description="Helical" evidence="1">
    <location>
        <begin position="7"/>
        <end position="29"/>
    </location>
</feature>
<feature type="topological domain" description="Periplasmic" evidence="1">
    <location>
        <begin position="30"/>
        <end position="43"/>
    </location>
</feature>
<feature type="transmembrane region" description="Helical" evidence="1">
    <location>
        <begin position="44"/>
        <end position="66"/>
    </location>
</feature>
<feature type="topological domain" description="Cytoplasmic" evidence="1">
    <location>
        <begin position="67"/>
        <end position="107"/>
    </location>
</feature>
<dbReference type="EMBL" id="U00039">
    <property type="protein sequence ID" value="AAB18564.1"/>
    <property type="molecule type" value="Genomic_DNA"/>
</dbReference>
<dbReference type="EMBL" id="U00096">
    <property type="protein sequence ID" value="AAC76611.1"/>
    <property type="molecule type" value="Genomic_DNA"/>
</dbReference>
<dbReference type="EMBL" id="AP009048">
    <property type="protein sequence ID" value="BAE77706.1"/>
    <property type="molecule type" value="Genomic_DNA"/>
</dbReference>
<dbReference type="PIR" id="S47808">
    <property type="entry name" value="S47808"/>
</dbReference>
<dbReference type="RefSeq" id="NP_418044.1">
    <property type="nucleotide sequence ID" value="NC_000913.3"/>
</dbReference>
<dbReference type="RefSeq" id="WP_000478195.1">
    <property type="nucleotide sequence ID" value="NZ_SSZK01000041.1"/>
</dbReference>
<dbReference type="SMR" id="P0ADK4"/>
<dbReference type="BioGRID" id="4262554">
    <property type="interactions" value="9"/>
</dbReference>
<dbReference type="FunCoup" id="P0ADK4">
    <property type="interactions" value="116"/>
</dbReference>
<dbReference type="STRING" id="511145.b3587"/>
<dbReference type="PaxDb" id="511145-b3587"/>
<dbReference type="EnsemblBacteria" id="AAC76611">
    <property type="protein sequence ID" value="AAC76611"/>
    <property type="gene ID" value="b3587"/>
</dbReference>
<dbReference type="GeneID" id="948105"/>
<dbReference type="KEGG" id="ecj:JW3559"/>
<dbReference type="KEGG" id="eco:b3587"/>
<dbReference type="KEGG" id="ecoc:C3026_19445"/>
<dbReference type="PATRIC" id="fig|1411691.4.peg.3125"/>
<dbReference type="EchoBASE" id="EB2199"/>
<dbReference type="eggNOG" id="ENOG5032S89">
    <property type="taxonomic scope" value="Bacteria"/>
</dbReference>
<dbReference type="HOGENOM" id="CLU_143375_0_0_6"/>
<dbReference type="InParanoid" id="P0ADK4"/>
<dbReference type="OMA" id="PDRGWGM"/>
<dbReference type="OrthoDB" id="5741122at2"/>
<dbReference type="PhylomeDB" id="P0ADK4"/>
<dbReference type="BioCyc" id="EcoCyc:EG12291-MONOMER"/>
<dbReference type="PRO" id="PR:P0ADK4"/>
<dbReference type="Proteomes" id="UP000000625">
    <property type="component" value="Chromosome"/>
</dbReference>
<dbReference type="GO" id="GO:0005886">
    <property type="term" value="C:plasma membrane"/>
    <property type="evidence" value="ECO:0000314"/>
    <property type="project" value="EcoCyc"/>
</dbReference>
<dbReference type="InterPro" id="IPR011223">
    <property type="entry name" value="UCP028770"/>
</dbReference>
<dbReference type="Pfam" id="PF11742">
    <property type="entry name" value="DUF3302"/>
    <property type="match status" value="1"/>
</dbReference>
<dbReference type="PIRSF" id="PIRSF028770">
    <property type="entry name" value="UCP028770"/>
    <property type="match status" value="1"/>
</dbReference>
<reference key="1">
    <citation type="journal article" date="1994" name="Nucleic Acids Res.">
        <title>Analysis of the Escherichia coli genome. V. DNA sequence of the region from 76.0 to 81.5 minutes.</title>
        <authorList>
            <person name="Sofia H.J."/>
            <person name="Burland V."/>
            <person name="Daniels D.L."/>
            <person name="Plunkett G. III"/>
            <person name="Blattner F.R."/>
        </authorList>
    </citation>
    <scope>NUCLEOTIDE SEQUENCE [LARGE SCALE GENOMIC DNA]</scope>
    <source>
        <strain>K12 / MG1655 / ATCC 47076</strain>
    </source>
</reference>
<reference key="2">
    <citation type="journal article" date="1997" name="Science">
        <title>The complete genome sequence of Escherichia coli K-12.</title>
        <authorList>
            <person name="Blattner F.R."/>
            <person name="Plunkett G. III"/>
            <person name="Bloch C.A."/>
            <person name="Perna N.T."/>
            <person name="Burland V."/>
            <person name="Riley M."/>
            <person name="Collado-Vides J."/>
            <person name="Glasner J.D."/>
            <person name="Rode C.K."/>
            <person name="Mayhew G.F."/>
            <person name="Gregor J."/>
            <person name="Davis N.W."/>
            <person name="Kirkpatrick H.A."/>
            <person name="Goeden M.A."/>
            <person name="Rose D.J."/>
            <person name="Mau B."/>
            <person name="Shao Y."/>
        </authorList>
    </citation>
    <scope>NUCLEOTIDE SEQUENCE [LARGE SCALE GENOMIC DNA]</scope>
    <source>
        <strain>K12 / MG1655 / ATCC 47076</strain>
    </source>
</reference>
<reference key="3">
    <citation type="journal article" date="2006" name="Mol. Syst. Biol.">
        <title>Highly accurate genome sequences of Escherichia coli K-12 strains MG1655 and W3110.</title>
        <authorList>
            <person name="Hayashi K."/>
            <person name="Morooka N."/>
            <person name="Yamamoto Y."/>
            <person name="Fujita K."/>
            <person name="Isono K."/>
            <person name="Choi S."/>
            <person name="Ohtsubo E."/>
            <person name="Baba T."/>
            <person name="Wanner B.L."/>
            <person name="Mori H."/>
            <person name="Horiuchi T."/>
        </authorList>
    </citation>
    <scope>NUCLEOTIDE SEQUENCE [LARGE SCALE GENOMIC DNA]</scope>
    <source>
        <strain>K12 / W3110 / ATCC 27325 / DSM 5911</strain>
    </source>
</reference>
<reference key="4">
    <citation type="journal article" date="2005" name="Science">
        <title>Global topology analysis of the Escherichia coli inner membrane proteome.</title>
        <authorList>
            <person name="Daley D.O."/>
            <person name="Rapp M."/>
            <person name="Granseth E."/>
            <person name="Melen K."/>
            <person name="Drew D."/>
            <person name="von Heijne G."/>
        </authorList>
    </citation>
    <scope>TOPOLOGY [LARGE SCALE ANALYSIS]</scope>
    <source>
        <strain>K12 / MG1655 / ATCC 47076</strain>
    </source>
</reference>
<evidence type="ECO:0000255" key="1"/>
<evidence type="ECO:0000305" key="2"/>
<keyword id="KW-0997">Cell inner membrane</keyword>
<keyword id="KW-1003">Cell membrane</keyword>
<keyword id="KW-0472">Membrane</keyword>
<keyword id="KW-1185">Reference proteome</keyword>
<keyword id="KW-0812">Transmembrane</keyword>
<keyword id="KW-1133">Transmembrane helix</keyword>
<gene>
    <name type="primary">yiaW</name>
    <name type="ordered locus">b3587</name>
    <name type="ordered locus">JW3559</name>
</gene>
<protein>
    <recommendedName>
        <fullName>Inner membrane protein YiaW</fullName>
    </recommendedName>
</protein>
<organism>
    <name type="scientific">Escherichia coli (strain K12)</name>
    <dbReference type="NCBI Taxonomy" id="83333"/>
    <lineage>
        <taxon>Bacteria</taxon>
        <taxon>Pseudomonadati</taxon>
        <taxon>Pseudomonadota</taxon>
        <taxon>Gammaproteobacteria</taxon>
        <taxon>Enterobacterales</taxon>
        <taxon>Enterobacteriaceae</taxon>
        <taxon>Escherichia</taxon>
    </lineage>
</organism>
<name>YIAW_ECOLI</name>
<accession>P0ADK4</accession>
<accession>P37684</accession>
<accession>Q2M7Q0</accession>